<reference key="1">
    <citation type="submission" date="2006-06" db="EMBL/GenBank/DDBJ databases">
        <title>Complete sequence of Pseudoalteromonas atlantica T6c.</title>
        <authorList>
            <consortium name="US DOE Joint Genome Institute"/>
            <person name="Copeland A."/>
            <person name="Lucas S."/>
            <person name="Lapidus A."/>
            <person name="Barry K."/>
            <person name="Detter J.C."/>
            <person name="Glavina del Rio T."/>
            <person name="Hammon N."/>
            <person name="Israni S."/>
            <person name="Dalin E."/>
            <person name="Tice H."/>
            <person name="Pitluck S."/>
            <person name="Saunders E."/>
            <person name="Brettin T."/>
            <person name="Bruce D."/>
            <person name="Han C."/>
            <person name="Tapia R."/>
            <person name="Gilna P."/>
            <person name="Schmutz J."/>
            <person name="Larimer F."/>
            <person name="Land M."/>
            <person name="Hauser L."/>
            <person name="Kyrpides N."/>
            <person name="Kim E."/>
            <person name="Karls A.C."/>
            <person name="Bartlett D."/>
            <person name="Higgins B.P."/>
            <person name="Richardson P."/>
        </authorList>
    </citation>
    <scope>NUCLEOTIDE SEQUENCE [LARGE SCALE GENOMIC DNA]</scope>
    <source>
        <strain>T6c / ATCC BAA-1087</strain>
    </source>
</reference>
<organism>
    <name type="scientific">Pseudoalteromonas atlantica (strain T6c / ATCC BAA-1087)</name>
    <dbReference type="NCBI Taxonomy" id="3042615"/>
    <lineage>
        <taxon>Bacteria</taxon>
        <taxon>Pseudomonadati</taxon>
        <taxon>Pseudomonadota</taxon>
        <taxon>Gammaproteobacteria</taxon>
        <taxon>Alteromonadales</taxon>
        <taxon>Alteromonadaceae</taxon>
        <taxon>Paraglaciecola</taxon>
    </lineage>
</organism>
<accession>Q15Q16</accession>
<feature type="chain" id="PRO_0000415207" description="Probable peptidoglycan glycosyltransferase FtsW">
    <location>
        <begin position="1"/>
        <end position="487"/>
    </location>
</feature>
<feature type="transmembrane region" description="Helical" evidence="1">
    <location>
        <begin position="30"/>
        <end position="50"/>
    </location>
</feature>
<feature type="transmembrane region" description="Helical" evidence="1">
    <location>
        <begin position="71"/>
        <end position="91"/>
    </location>
</feature>
<feature type="transmembrane region" description="Helical" evidence="1">
    <location>
        <begin position="93"/>
        <end position="113"/>
    </location>
</feature>
<feature type="transmembrane region" description="Helical" evidence="1">
    <location>
        <begin position="122"/>
        <end position="142"/>
    </location>
</feature>
<feature type="transmembrane region" description="Helical" evidence="1">
    <location>
        <begin position="167"/>
        <end position="187"/>
    </location>
</feature>
<feature type="transmembrane region" description="Helical" evidence="1">
    <location>
        <begin position="203"/>
        <end position="223"/>
    </location>
</feature>
<feature type="transmembrane region" description="Helical" evidence="1">
    <location>
        <begin position="282"/>
        <end position="302"/>
    </location>
</feature>
<feature type="transmembrane region" description="Helical" evidence="1">
    <location>
        <begin position="332"/>
        <end position="352"/>
    </location>
</feature>
<feature type="transmembrane region" description="Helical" evidence="1">
    <location>
        <begin position="358"/>
        <end position="378"/>
    </location>
</feature>
<feature type="region of interest" description="Disordered" evidence="2">
    <location>
        <begin position="398"/>
        <end position="419"/>
    </location>
</feature>
<feature type="region of interest" description="Disordered" evidence="2">
    <location>
        <begin position="444"/>
        <end position="487"/>
    </location>
</feature>
<feature type="compositionally biased region" description="Polar residues" evidence="2">
    <location>
        <begin position="401"/>
        <end position="416"/>
    </location>
</feature>
<feature type="compositionally biased region" description="Acidic residues" evidence="2">
    <location>
        <begin position="444"/>
        <end position="453"/>
    </location>
</feature>
<keyword id="KW-0131">Cell cycle</keyword>
<keyword id="KW-0132">Cell division</keyword>
<keyword id="KW-0997">Cell inner membrane</keyword>
<keyword id="KW-1003">Cell membrane</keyword>
<keyword id="KW-0133">Cell shape</keyword>
<keyword id="KW-0961">Cell wall biogenesis/degradation</keyword>
<keyword id="KW-0328">Glycosyltransferase</keyword>
<keyword id="KW-0472">Membrane</keyword>
<keyword id="KW-0573">Peptidoglycan synthesis</keyword>
<keyword id="KW-0808">Transferase</keyword>
<keyword id="KW-0812">Transmembrane</keyword>
<keyword id="KW-1133">Transmembrane helix</keyword>
<dbReference type="EC" id="2.4.99.28" evidence="1"/>
<dbReference type="EMBL" id="CP000388">
    <property type="protein sequence ID" value="ABG42022.1"/>
    <property type="molecule type" value="Genomic_DNA"/>
</dbReference>
<dbReference type="RefSeq" id="WP_011576250.1">
    <property type="nucleotide sequence ID" value="NC_008228.1"/>
</dbReference>
<dbReference type="SMR" id="Q15Q16"/>
<dbReference type="STRING" id="342610.Patl_3520"/>
<dbReference type="KEGG" id="pat:Patl_3520"/>
<dbReference type="eggNOG" id="COG0772">
    <property type="taxonomic scope" value="Bacteria"/>
</dbReference>
<dbReference type="HOGENOM" id="CLU_029243_1_1_6"/>
<dbReference type="OrthoDB" id="9768187at2"/>
<dbReference type="UniPathway" id="UPA00219"/>
<dbReference type="Proteomes" id="UP000001981">
    <property type="component" value="Chromosome"/>
</dbReference>
<dbReference type="GO" id="GO:0032153">
    <property type="term" value="C:cell division site"/>
    <property type="evidence" value="ECO:0007669"/>
    <property type="project" value="UniProtKB-UniRule"/>
</dbReference>
<dbReference type="GO" id="GO:0005886">
    <property type="term" value="C:plasma membrane"/>
    <property type="evidence" value="ECO:0007669"/>
    <property type="project" value="UniProtKB-SubCell"/>
</dbReference>
<dbReference type="GO" id="GO:0015648">
    <property type="term" value="F:lipid-linked peptidoglycan transporter activity"/>
    <property type="evidence" value="ECO:0007669"/>
    <property type="project" value="TreeGrafter"/>
</dbReference>
<dbReference type="GO" id="GO:0008955">
    <property type="term" value="F:peptidoglycan glycosyltransferase activity"/>
    <property type="evidence" value="ECO:0007669"/>
    <property type="project" value="UniProtKB-UniRule"/>
</dbReference>
<dbReference type="GO" id="GO:0071555">
    <property type="term" value="P:cell wall organization"/>
    <property type="evidence" value="ECO:0007669"/>
    <property type="project" value="UniProtKB-KW"/>
</dbReference>
<dbReference type="GO" id="GO:0043093">
    <property type="term" value="P:FtsZ-dependent cytokinesis"/>
    <property type="evidence" value="ECO:0007669"/>
    <property type="project" value="UniProtKB-UniRule"/>
</dbReference>
<dbReference type="GO" id="GO:0009252">
    <property type="term" value="P:peptidoglycan biosynthetic process"/>
    <property type="evidence" value="ECO:0007669"/>
    <property type="project" value="UniProtKB-UniRule"/>
</dbReference>
<dbReference type="GO" id="GO:0008360">
    <property type="term" value="P:regulation of cell shape"/>
    <property type="evidence" value="ECO:0007669"/>
    <property type="project" value="UniProtKB-KW"/>
</dbReference>
<dbReference type="HAMAP" id="MF_00913">
    <property type="entry name" value="PGT_FtsW_proteobact"/>
    <property type="match status" value="1"/>
</dbReference>
<dbReference type="InterPro" id="IPR018365">
    <property type="entry name" value="Cell_cycle_FtsW-rel_CS"/>
</dbReference>
<dbReference type="InterPro" id="IPR013437">
    <property type="entry name" value="FtsW"/>
</dbReference>
<dbReference type="InterPro" id="IPR001182">
    <property type="entry name" value="FtsW/RodA"/>
</dbReference>
<dbReference type="NCBIfam" id="TIGR02614">
    <property type="entry name" value="ftsW"/>
    <property type="match status" value="1"/>
</dbReference>
<dbReference type="NCBIfam" id="NF008042">
    <property type="entry name" value="PRK10774.1"/>
    <property type="match status" value="1"/>
</dbReference>
<dbReference type="PANTHER" id="PTHR30474">
    <property type="entry name" value="CELL CYCLE PROTEIN"/>
    <property type="match status" value="1"/>
</dbReference>
<dbReference type="PANTHER" id="PTHR30474:SF2">
    <property type="entry name" value="PEPTIDOGLYCAN GLYCOSYLTRANSFERASE FTSW-RELATED"/>
    <property type="match status" value="1"/>
</dbReference>
<dbReference type="Pfam" id="PF01098">
    <property type="entry name" value="FTSW_RODA_SPOVE"/>
    <property type="match status" value="1"/>
</dbReference>
<dbReference type="PROSITE" id="PS00428">
    <property type="entry name" value="FTSW_RODA_SPOVE"/>
    <property type="match status" value="1"/>
</dbReference>
<evidence type="ECO:0000255" key="1">
    <source>
        <dbReference type="HAMAP-Rule" id="MF_00913"/>
    </source>
</evidence>
<evidence type="ECO:0000256" key="2">
    <source>
        <dbReference type="SAM" id="MobiDB-lite"/>
    </source>
</evidence>
<name>FTSW_PSEA6</name>
<proteinExistence type="inferred from homology"/>
<sequence>MNTSTFATPLRAMFAQRHDAAPAVVRPYDVSLILLALSLMAIGLVIVTSASMPVASRLFDNPFHFAIRHGIYIVLAIGAALTVMQIPMQWWRTSNAWLLLLGLVLLIAVLLVGRSVNGSTRWLAIGPITIQAAEPAKLFFFCYLAGYLVRRYEEVTENIKGFAKPLVVFFAFAVLLLLQPDLGTVVVMLCTTIGLLFLAGAKLWQFFGLAFTGGAAVTFLIMFEEYRMKRITSFLDPWADPFGSGYQLTQSLMAYGRGDVFGQGLGNSLQKLEYLPEAHTDFIMAILAEELGFAGVLTVLALMLCIVLKAMKMGSKALQNERPFDAYLAYSIGIWFSFQTAVNVGASAGILPTKGLTFPLLSYGGSSLIIMAAAVGLLVRIDFEMRVEGIQAIDRSGKAKASTSSSRKNKPKTASSAGKKKVSTVLDDVAYAVVDDVQDEEQDIDSIMDDFAQDESAQTVSHQTKRASKSTSKTPRGKDEEQEDGYV</sequence>
<comment type="function">
    <text evidence="1">Peptidoglycan polymerase that is essential for cell division.</text>
</comment>
<comment type="catalytic activity">
    <reaction evidence="1">
        <text>[GlcNAc-(1-&gt;4)-Mur2Ac(oyl-L-Ala-gamma-D-Glu-L-Lys-D-Ala-D-Ala)](n)-di-trans,octa-cis-undecaprenyl diphosphate + beta-D-GlcNAc-(1-&gt;4)-Mur2Ac(oyl-L-Ala-gamma-D-Glu-L-Lys-D-Ala-D-Ala)-di-trans,octa-cis-undecaprenyl diphosphate = [GlcNAc-(1-&gt;4)-Mur2Ac(oyl-L-Ala-gamma-D-Glu-L-Lys-D-Ala-D-Ala)](n+1)-di-trans,octa-cis-undecaprenyl diphosphate + di-trans,octa-cis-undecaprenyl diphosphate + H(+)</text>
        <dbReference type="Rhea" id="RHEA:23708"/>
        <dbReference type="Rhea" id="RHEA-COMP:9602"/>
        <dbReference type="Rhea" id="RHEA-COMP:9603"/>
        <dbReference type="ChEBI" id="CHEBI:15378"/>
        <dbReference type="ChEBI" id="CHEBI:58405"/>
        <dbReference type="ChEBI" id="CHEBI:60033"/>
        <dbReference type="ChEBI" id="CHEBI:78435"/>
        <dbReference type="EC" id="2.4.99.28"/>
    </reaction>
</comment>
<comment type="pathway">
    <text evidence="1">Cell wall biogenesis; peptidoglycan biosynthesis.</text>
</comment>
<comment type="subcellular location">
    <subcellularLocation>
        <location evidence="1">Cell inner membrane</location>
        <topology evidence="1">Multi-pass membrane protein</topology>
    </subcellularLocation>
    <text evidence="1">Localizes to the division septum.</text>
</comment>
<comment type="similarity">
    <text evidence="1">Belongs to the SEDS family. FtsW subfamily.</text>
</comment>
<gene>
    <name evidence="1" type="primary">ftsW</name>
    <name type="ordered locus">Patl_3520</name>
</gene>
<protein>
    <recommendedName>
        <fullName evidence="1">Probable peptidoglycan glycosyltransferase FtsW</fullName>
        <shortName evidence="1">PGT</shortName>
        <ecNumber evidence="1">2.4.99.28</ecNumber>
    </recommendedName>
    <alternativeName>
        <fullName evidence="1">Cell division protein FtsW</fullName>
    </alternativeName>
    <alternativeName>
        <fullName evidence="1">Cell wall polymerase</fullName>
    </alternativeName>
    <alternativeName>
        <fullName evidence="1">Peptidoglycan polymerase</fullName>
        <shortName evidence="1">PG polymerase</shortName>
    </alternativeName>
</protein>